<name>RL19_SALAR</name>
<proteinExistence type="inferred from homology"/>
<organism>
    <name type="scientific">Salmonella arizonae (strain ATCC BAA-731 / CDC346-86 / RSK2980)</name>
    <dbReference type="NCBI Taxonomy" id="41514"/>
    <lineage>
        <taxon>Bacteria</taxon>
        <taxon>Pseudomonadati</taxon>
        <taxon>Pseudomonadota</taxon>
        <taxon>Gammaproteobacteria</taxon>
        <taxon>Enterobacterales</taxon>
        <taxon>Enterobacteriaceae</taxon>
        <taxon>Salmonella</taxon>
    </lineage>
</organism>
<accession>A9MGT8</accession>
<feature type="chain" id="PRO_1000080368" description="Large ribosomal subunit protein bL19">
    <location>
        <begin position="1"/>
        <end position="115"/>
    </location>
</feature>
<sequence length="115" mass="13130">MSNIIKQLEQEQMKQNVPSFRPGDTVEVKVWVVEGTKKRLQAFEGVVIAIRNRGLHSAFTVRKISNGEGVERVFQTHSPVVDSIAVKRRGAVRKAKLYYLRERTGKAARIKERLN</sequence>
<evidence type="ECO:0000255" key="1">
    <source>
        <dbReference type="HAMAP-Rule" id="MF_00402"/>
    </source>
</evidence>
<evidence type="ECO:0000305" key="2"/>
<dbReference type="EMBL" id="CP000880">
    <property type="protein sequence ID" value="ABX20199.1"/>
    <property type="molecule type" value="Genomic_DNA"/>
</dbReference>
<dbReference type="SMR" id="A9MGT8"/>
<dbReference type="STRING" id="41514.SARI_00253"/>
<dbReference type="KEGG" id="ses:SARI_00253"/>
<dbReference type="HOGENOM" id="CLU_103507_2_1_6"/>
<dbReference type="Proteomes" id="UP000002084">
    <property type="component" value="Chromosome"/>
</dbReference>
<dbReference type="GO" id="GO:0022625">
    <property type="term" value="C:cytosolic large ribosomal subunit"/>
    <property type="evidence" value="ECO:0007669"/>
    <property type="project" value="TreeGrafter"/>
</dbReference>
<dbReference type="GO" id="GO:0003735">
    <property type="term" value="F:structural constituent of ribosome"/>
    <property type="evidence" value="ECO:0007669"/>
    <property type="project" value="InterPro"/>
</dbReference>
<dbReference type="GO" id="GO:0006412">
    <property type="term" value="P:translation"/>
    <property type="evidence" value="ECO:0007669"/>
    <property type="project" value="UniProtKB-UniRule"/>
</dbReference>
<dbReference type="FunFam" id="2.30.30.790:FF:000001">
    <property type="entry name" value="50S ribosomal protein L19"/>
    <property type="match status" value="1"/>
</dbReference>
<dbReference type="Gene3D" id="2.30.30.790">
    <property type="match status" value="1"/>
</dbReference>
<dbReference type="HAMAP" id="MF_00402">
    <property type="entry name" value="Ribosomal_bL19"/>
    <property type="match status" value="1"/>
</dbReference>
<dbReference type="InterPro" id="IPR001857">
    <property type="entry name" value="Ribosomal_bL19"/>
</dbReference>
<dbReference type="InterPro" id="IPR018257">
    <property type="entry name" value="Ribosomal_bL19_CS"/>
</dbReference>
<dbReference type="InterPro" id="IPR038657">
    <property type="entry name" value="Ribosomal_bL19_sf"/>
</dbReference>
<dbReference type="InterPro" id="IPR008991">
    <property type="entry name" value="Translation_prot_SH3-like_sf"/>
</dbReference>
<dbReference type="NCBIfam" id="TIGR01024">
    <property type="entry name" value="rplS_bact"/>
    <property type="match status" value="1"/>
</dbReference>
<dbReference type="PANTHER" id="PTHR15680:SF9">
    <property type="entry name" value="LARGE RIBOSOMAL SUBUNIT PROTEIN BL19M"/>
    <property type="match status" value="1"/>
</dbReference>
<dbReference type="PANTHER" id="PTHR15680">
    <property type="entry name" value="RIBOSOMAL PROTEIN L19"/>
    <property type="match status" value="1"/>
</dbReference>
<dbReference type="Pfam" id="PF01245">
    <property type="entry name" value="Ribosomal_L19"/>
    <property type="match status" value="1"/>
</dbReference>
<dbReference type="PIRSF" id="PIRSF002191">
    <property type="entry name" value="Ribosomal_L19"/>
    <property type="match status" value="1"/>
</dbReference>
<dbReference type="PRINTS" id="PR00061">
    <property type="entry name" value="RIBOSOMALL19"/>
</dbReference>
<dbReference type="SUPFAM" id="SSF50104">
    <property type="entry name" value="Translation proteins SH3-like domain"/>
    <property type="match status" value="1"/>
</dbReference>
<dbReference type="PROSITE" id="PS01015">
    <property type="entry name" value="RIBOSOMAL_L19"/>
    <property type="match status" value="1"/>
</dbReference>
<reference key="1">
    <citation type="submission" date="2007-11" db="EMBL/GenBank/DDBJ databases">
        <authorList>
            <consortium name="The Salmonella enterica serovar Arizonae Genome Sequencing Project"/>
            <person name="McClelland M."/>
            <person name="Sanderson E.K."/>
            <person name="Porwollik S."/>
            <person name="Spieth J."/>
            <person name="Clifton W.S."/>
            <person name="Fulton R."/>
            <person name="Chunyan W."/>
            <person name="Wollam A."/>
            <person name="Shah N."/>
            <person name="Pepin K."/>
            <person name="Bhonagiri V."/>
            <person name="Nash W."/>
            <person name="Johnson M."/>
            <person name="Thiruvilangam P."/>
            <person name="Wilson R."/>
        </authorList>
    </citation>
    <scope>NUCLEOTIDE SEQUENCE [LARGE SCALE GENOMIC DNA]</scope>
    <source>
        <strain>ATCC BAA-731 / CDC346-86 / RSK2980</strain>
    </source>
</reference>
<protein>
    <recommendedName>
        <fullName evidence="1">Large ribosomal subunit protein bL19</fullName>
    </recommendedName>
    <alternativeName>
        <fullName evidence="2">50S ribosomal protein L19</fullName>
    </alternativeName>
</protein>
<keyword id="KW-1185">Reference proteome</keyword>
<keyword id="KW-0687">Ribonucleoprotein</keyword>
<keyword id="KW-0689">Ribosomal protein</keyword>
<comment type="function">
    <text evidence="1">This protein is located at the 30S-50S ribosomal subunit interface and may play a role in the structure and function of the aminoacyl-tRNA binding site.</text>
</comment>
<comment type="similarity">
    <text evidence="1">Belongs to the bacterial ribosomal protein bL19 family.</text>
</comment>
<gene>
    <name evidence="1" type="primary">rplS</name>
    <name type="ordered locus">SARI_00253</name>
</gene>